<protein>
    <recommendedName>
        <fullName evidence="1">Anamorsin homolog</fullName>
    </recommendedName>
    <alternativeName>
        <fullName evidence="1">Fe-S cluster assembly protein DRE2 homolog</fullName>
    </alternativeName>
</protein>
<reference key="1">
    <citation type="journal article" date="2008" name="Nature">
        <title>The genome of the simian and human malaria parasite Plasmodium knowlesi.</title>
        <authorList>
            <person name="Pain A."/>
            <person name="Boehme U."/>
            <person name="Berry A.E."/>
            <person name="Mungall K."/>
            <person name="Finn R.D."/>
            <person name="Jackson A.P."/>
            <person name="Mourier T."/>
            <person name="Mistry J."/>
            <person name="Pasini E.M."/>
            <person name="Aslett M.A."/>
            <person name="Balasubrammaniam S."/>
            <person name="Borgwardt K."/>
            <person name="Brooks K."/>
            <person name="Carret C."/>
            <person name="Carver T.J."/>
            <person name="Cherevach I."/>
            <person name="Chillingworth T."/>
            <person name="Clark T.G."/>
            <person name="Galinski M.R."/>
            <person name="Hall N."/>
            <person name="Harper D."/>
            <person name="Harris D."/>
            <person name="Hauser H."/>
            <person name="Ivens A."/>
            <person name="Janssen C.S."/>
            <person name="Keane T."/>
            <person name="Larke N."/>
            <person name="Lapp S."/>
            <person name="Marti M."/>
            <person name="Moule S."/>
            <person name="Meyer I.M."/>
            <person name="Ormond D."/>
            <person name="Peters N."/>
            <person name="Sanders M."/>
            <person name="Sanders S."/>
            <person name="Sargeant T.J."/>
            <person name="Simmonds M."/>
            <person name="Smith F."/>
            <person name="Squares R."/>
            <person name="Thurston S."/>
            <person name="Tivey A.R."/>
            <person name="Walker D."/>
            <person name="White B."/>
            <person name="Zuiderwijk E."/>
            <person name="Churcher C."/>
            <person name="Quail M.A."/>
            <person name="Cowman A.F."/>
            <person name="Turner C.M.R."/>
            <person name="Rajandream M.A."/>
            <person name="Kocken C.H.M."/>
            <person name="Thomas A.W."/>
            <person name="Newbold C.I."/>
            <person name="Barrell B.G."/>
            <person name="Berriman M."/>
        </authorList>
    </citation>
    <scope>NUCLEOTIDE SEQUENCE [LARGE SCALE GENOMIC DNA]</scope>
    <source>
        <strain>H</strain>
    </source>
</reference>
<gene>
    <name type="ORF">PKH_050640</name>
</gene>
<dbReference type="EMBL" id="AM910987">
    <property type="protein sequence ID" value="CAQ38614.1"/>
    <property type="molecule type" value="Genomic_DNA"/>
</dbReference>
<dbReference type="RefSeq" id="XP_002258077.1">
    <property type="nucleotide sequence ID" value="XM_002258041.1"/>
</dbReference>
<dbReference type="STRING" id="5851.B3L145"/>
<dbReference type="EnsemblProtists" id="CAQ38614">
    <property type="protein sequence ID" value="CAQ38614"/>
    <property type="gene ID" value="PKH_050640"/>
</dbReference>
<dbReference type="GeneID" id="7319465"/>
<dbReference type="KEGG" id="pkn:PKNH_1318600"/>
<dbReference type="VEuPathDB" id="PlasmoDB:PKNH_1318600"/>
<dbReference type="HOGENOM" id="CLU_1149165_0_0_1"/>
<dbReference type="InParanoid" id="B3L145"/>
<dbReference type="OMA" id="PCELLRK"/>
<dbReference type="OrthoDB" id="311633at2759"/>
<dbReference type="PhylomeDB" id="B3L145"/>
<dbReference type="Proteomes" id="UP000031513">
    <property type="component" value="Chromosome 5"/>
</dbReference>
<dbReference type="GO" id="GO:0005758">
    <property type="term" value="C:mitochondrial intermembrane space"/>
    <property type="evidence" value="ECO:0007669"/>
    <property type="project" value="UniProtKB-SubCell"/>
</dbReference>
<dbReference type="GO" id="GO:0051537">
    <property type="term" value="F:2 iron, 2 sulfur cluster binding"/>
    <property type="evidence" value="ECO:0007669"/>
    <property type="project" value="UniProtKB-UniRule"/>
</dbReference>
<dbReference type="GO" id="GO:0051539">
    <property type="term" value="F:4 iron, 4 sulfur cluster binding"/>
    <property type="evidence" value="ECO:0007669"/>
    <property type="project" value="UniProtKB-KW"/>
</dbReference>
<dbReference type="GO" id="GO:0009055">
    <property type="term" value="F:electron transfer activity"/>
    <property type="evidence" value="ECO:0007669"/>
    <property type="project" value="UniProtKB-UniRule"/>
</dbReference>
<dbReference type="GO" id="GO:0046872">
    <property type="term" value="F:metal ion binding"/>
    <property type="evidence" value="ECO:0007669"/>
    <property type="project" value="UniProtKB-KW"/>
</dbReference>
<dbReference type="GO" id="GO:0016226">
    <property type="term" value="P:iron-sulfur cluster assembly"/>
    <property type="evidence" value="ECO:0007669"/>
    <property type="project" value="UniProtKB-UniRule"/>
</dbReference>
<dbReference type="HAMAP" id="MF_03115">
    <property type="entry name" value="Anamorsin"/>
    <property type="match status" value="1"/>
</dbReference>
<dbReference type="InterPro" id="IPR007785">
    <property type="entry name" value="Anamorsin"/>
</dbReference>
<dbReference type="InterPro" id="IPR046408">
    <property type="entry name" value="CIAPIN1"/>
</dbReference>
<dbReference type="PANTHER" id="PTHR13273">
    <property type="entry name" value="ANAMORSIN"/>
    <property type="match status" value="1"/>
</dbReference>
<dbReference type="PANTHER" id="PTHR13273:SF14">
    <property type="entry name" value="ANAMORSIN"/>
    <property type="match status" value="1"/>
</dbReference>
<dbReference type="Pfam" id="PF05093">
    <property type="entry name" value="CIAPIN1"/>
    <property type="match status" value="1"/>
</dbReference>
<organism>
    <name type="scientific">Plasmodium knowlesi (strain H)</name>
    <dbReference type="NCBI Taxonomy" id="5851"/>
    <lineage>
        <taxon>Eukaryota</taxon>
        <taxon>Sar</taxon>
        <taxon>Alveolata</taxon>
        <taxon>Apicomplexa</taxon>
        <taxon>Aconoidasida</taxon>
        <taxon>Haemosporida</taxon>
        <taxon>Plasmodiidae</taxon>
        <taxon>Plasmodium</taxon>
        <taxon>Plasmodium (Plasmodium)</taxon>
    </lineage>
</organism>
<proteinExistence type="inferred from homology"/>
<feature type="chain" id="PRO_0000392357" description="Anamorsin homolog">
    <location>
        <begin position="1"/>
        <end position="242"/>
    </location>
</feature>
<feature type="region of interest" description="N-terminal SAM-like domain" evidence="1">
    <location>
        <begin position="1"/>
        <end position="140"/>
    </location>
</feature>
<feature type="region of interest" description="Linker" evidence="1">
    <location>
        <begin position="141"/>
        <end position="162"/>
    </location>
</feature>
<feature type="region of interest" description="Fe-S binding site B" evidence="1">
    <location>
        <begin position="205"/>
        <end position="219"/>
    </location>
</feature>
<feature type="short sequence motif" description="Cx2C motif 1" evidence="1">
    <location>
        <begin position="205"/>
        <end position="208"/>
    </location>
</feature>
<feature type="short sequence motif" description="Cx2C motif 2" evidence="1">
    <location>
        <begin position="216"/>
        <end position="219"/>
    </location>
</feature>
<feature type="binding site" evidence="1">
    <location>
        <position position="205"/>
    </location>
    <ligand>
        <name>[4Fe-4S] cluster</name>
        <dbReference type="ChEBI" id="CHEBI:49883"/>
    </ligand>
</feature>
<feature type="binding site" evidence="1">
    <location>
        <position position="208"/>
    </location>
    <ligand>
        <name>[4Fe-4S] cluster</name>
        <dbReference type="ChEBI" id="CHEBI:49883"/>
    </ligand>
</feature>
<feature type="binding site" evidence="1">
    <location>
        <position position="216"/>
    </location>
    <ligand>
        <name>[4Fe-4S] cluster</name>
        <dbReference type="ChEBI" id="CHEBI:49883"/>
    </ligand>
</feature>
<feature type="binding site" evidence="1">
    <location>
        <position position="219"/>
    </location>
    <ligand>
        <name>[4Fe-4S] cluster</name>
        <dbReference type="ChEBI" id="CHEBI:49883"/>
    </ligand>
</feature>
<name>DRE2_PLAKH</name>
<comment type="function">
    <text evidence="1">Component of the cytosolic iron-sulfur (Fe-S) protein assembly (CIA) machinery. Required for the maturation of extramitochondrial Fe-S proteins. Part of an electron transfer chain functioning in an early step of cytosolic Fe-S biogenesis, facilitating the de novo assembly of a [4Fe-4S] cluster on the cytosolic Fe-S scaffold complex. Electrons are transferred from NADPH via a FAD- and FMN-containing diflavin oxidoreductase. Together with the diflavin oxidoreductase, also required for the assembly of the diferric tyrosyl radical cofactor of ribonucleotide reductase (RNR), probably by providing electrons for reduction during radical cofactor maturation in the catalytic small subunit.</text>
</comment>
<comment type="cofactor">
    <cofactor evidence="1">
        <name>[4Fe-4S] cluster</name>
        <dbReference type="ChEBI" id="CHEBI:49883"/>
    </cofactor>
</comment>
<comment type="subunit">
    <text evidence="1">Monomer.</text>
</comment>
<comment type="subcellular location">
    <subcellularLocation>
        <location evidence="1">Cytoplasm</location>
    </subcellularLocation>
    <subcellularLocation>
        <location evidence="1">Mitochondrion intermembrane space</location>
    </subcellularLocation>
</comment>
<comment type="domain">
    <text evidence="1">The C-terminal domain binds 2 Fe-S clusters but is otherwise mostly in an intrinsically disordered conformation.</text>
</comment>
<comment type="domain">
    <text evidence="1">The N-terminal domain has structural similarity with S-adenosyl-L-methionine-dependent methyltransferases, but does not bind S-adenosyl-L-methionine. It is required for correct assembly of the 2 Fe-S clusters.</text>
</comment>
<comment type="domain">
    <text evidence="1">The twin Cx2C motifs are involved in the recognition by the mitochondrial MIA40-ERV1 disulfide relay system. The formation of 2 disulfide bonds in the Cx2C motifs through dithiol/disulfide exchange reactions effectively traps the protein in the mitochondrial intermembrane space.</text>
</comment>
<comment type="similarity">
    <text evidence="1">Belongs to the anamorsin family.</text>
</comment>
<sequence>MMNFADTLVILNEDAPCELLRKKYAQMLVPTVSVSNFKKNKQYKTYNNVFLYTYREYDFLWDLDDNVLHKIQRCLNKSGVLKLVLYISNTDGGDNKTHDEIAKRLKRECLYSGFINISNEISMAENGIIINVTAENPDFLSNEDDDEGNSSDGEAYQNAEDNKKVVNRVCANCTCGKKTNGVKLDKVTINEKEVQYLTENAVSSCGNCYLGDAFRCASCPYKGLPAFQPGENVKLNLDNEPN</sequence>
<accession>B3L145</accession>
<keyword id="KW-0004">4Fe-4S</keyword>
<keyword id="KW-0963">Cytoplasm</keyword>
<keyword id="KW-0408">Iron</keyword>
<keyword id="KW-0411">Iron-sulfur</keyword>
<keyword id="KW-0479">Metal-binding</keyword>
<keyword id="KW-0496">Mitochondrion</keyword>
<keyword id="KW-1185">Reference proteome</keyword>
<evidence type="ECO:0000255" key="1">
    <source>
        <dbReference type="HAMAP-Rule" id="MF_03115"/>
    </source>
</evidence>